<comment type="function">
    <text evidence="1">Cell wall formation. Adds enolpyruvyl to UDP-N-acetylglucosamine.</text>
</comment>
<comment type="catalytic activity">
    <reaction evidence="1">
        <text>phosphoenolpyruvate + UDP-N-acetyl-alpha-D-glucosamine = UDP-N-acetyl-3-O-(1-carboxyvinyl)-alpha-D-glucosamine + phosphate</text>
        <dbReference type="Rhea" id="RHEA:18681"/>
        <dbReference type="ChEBI" id="CHEBI:43474"/>
        <dbReference type="ChEBI" id="CHEBI:57705"/>
        <dbReference type="ChEBI" id="CHEBI:58702"/>
        <dbReference type="ChEBI" id="CHEBI:68483"/>
        <dbReference type="EC" id="2.5.1.7"/>
    </reaction>
</comment>
<comment type="pathway">
    <text evidence="1">Cell wall biogenesis; peptidoglycan biosynthesis.</text>
</comment>
<comment type="subcellular location">
    <subcellularLocation>
        <location evidence="1">Cytoplasm</location>
    </subcellularLocation>
</comment>
<comment type="similarity">
    <text evidence="1">Belongs to the EPSP synthase family. MurA subfamily.</text>
</comment>
<evidence type="ECO:0000255" key="1">
    <source>
        <dbReference type="HAMAP-Rule" id="MF_00111"/>
    </source>
</evidence>
<proteinExistence type="inferred from homology"/>
<organism>
    <name type="scientific">Neisseria meningitidis serogroup C (strain 053442)</name>
    <dbReference type="NCBI Taxonomy" id="374833"/>
    <lineage>
        <taxon>Bacteria</taxon>
        <taxon>Pseudomonadati</taxon>
        <taxon>Pseudomonadota</taxon>
        <taxon>Betaproteobacteria</taxon>
        <taxon>Neisseriales</taxon>
        <taxon>Neisseriaceae</taxon>
        <taxon>Neisseria</taxon>
    </lineage>
</organism>
<protein>
    <recommendedName>
        <fullName evidence="1">UDP-N-acetylglucosamine 1-carboxyvinyltransferase</fullName>
        <ecNumber evidence="1">2.5.1.7</ecNumber>
    </recommendedName>
    <alternativeName>
        <fullName evidence="1">Enoylpyruvate transferase</fullName>
    </alternativeName>
    <alternativeName>
        <fullName evidence="1">UDP-N-acetylglucosamine enolpyruvyl transferase</fullName>
        <shortName evidence="1">EPT</shortName>
    </alternativeName>
</protein>
<dbReference type="EC" id="2.5.1.7" evidence="1"/>
<dbReference type="EMBL" id="CP000381">
    <property type="protein sequence ID" value="ABX72243.1"/>
    <property type="molecule type" value="Genomic_DNA"/>
</dbReference>
<dbReference type="RefSeq" id="WP_012221092.1">
    <property type="nucleotide sequence ID" value="NC_010120.1"/>
</dbReference>
<dbReference type="SMR" id="A9LZI5"/>
<dbReference type="KEGG" id="nmn:NMCC_0012"/>
<dbReference type="HOGENOM" id="CLU_027387_0_0_4"/>
<dbReference type="UniPathway" id="UPA00219"/>
<dbReference type="Proteomes" id="UP000001177">
    <property type="component" value="Chromosome"/>
</dbReference>
<dbReference type="GO" id="GO:0005737">
    <property type="term" value="C:cytoplasm"/>
    <property type="evidence" value="ECO:0007669"/>
    <property type="project" value="UniProtKB-SubCell"/>
</dbReference>
<dbReference type="GO" id="GO:0008760">
    <property type="term" value="F:UDP-N-acetylglucosamine 1-carboxyvinyltransferase activity"/>
    <property type="evidence" value="ECO:0007669"/>
    <property type="project" value="UniProtKB-UniRule"/>
</dbReference>
<dbReference type="GO" id="GO:0051301">
    <property type="term" value="P:cell division"/>
    <property type="evidence" value="ECO:0007669"/>
    <property type="project" value="UniProtKB-KW"/>
</dbReference>
<dbReference type="GO" id="GO:0071555">
    <property type="term" value="P:cell wall organization"/>
    <property type="evidence" value="ECO:0007669"/>
    <property type="project" value="UniProtKB-KW"/>
</dbReference>
<dbReference type="GO" id="GO:0009252">
    <property type="term" value="P:peptidoglycan biosynthetic process"/>
    <property type="evidence" value="ECO:0007669"/>
    <property type="project" value="UniProtKB-UniRule"/>
</dbReference>
<dbReference type="GO" id="GO:0008360">
    <property type="term" value="P:regulation of cell shape"/>
    <property type="evidence" value="ECO:0007669"/>
    <property type="project" value="UniProtKB-KW"/>
</dbReference>
<dbReference type="GO" id="GO:0019277">
    <property type="term" value="P:UDP-N-acetylgalactosamine biosynthetic process"/>
    <property type="evidence" value="ECO:0007669"/>
    <property type="project" value="InterPro"/>
</dbReference>
<dbReference type="CDD" id="cd01555">
    <property type="entry name" value="UdpNAET"/>
    <property type="match status" value="1"/>
</dbReference>
<dbReference type="FunFam" id="3.65.10.10:FF:000002">
    <property type="entry name" value="UDP-N-acetylglucosamine 1-carboxyvinyltransferase"/>
    <property type="match status" value="1"/>
</dbReference>
<dbReference type="Gene3D" id="3.65.10.10">
    <property type="entry name" value="Enolpyruvate transferase domain"/>
    <property type="match status" value="2"/>
</dbReference>
<dbReference type="HAMAP" id="MF_00111">
    <property type="entry name" value="MurA"/>
    <property type="match status" value="1"/>
</dbReference>
<dbReference type="InterPro" id="IPR001986">
    <property type="entry name" value="Enolpyruvate_Tfrase_dom"/>
</dbReference>
<dbReference type="InterPro" id="IPR036968">
    <property type="entry name" value="Enolpyruvate_Tfrase_sf"/>
</dbReference>
<dbReference type="InterPro" id="IPR050068">
    <property type="entry name" value="MurA_subfamily"/>
</dbReference>
<dbReference type="InterPro" id="IPR013792">
    <property type="entry name" value="RNA3'P_cycl/enolpyr_Trfase_a/b"/>
</dbReference>
<dbReference type="InterPro" id="IPR005750">
    <property type="entry name" value="UDP_GlcNAc_COvinyl_MurA"/>
</dbReference>
<dbReference type="NCBIfam" id="TIGR01072">
    <property type="entry name" value="murA"/>
    <property type="match status" value="1"/>
</dbReference>
<dbReference type="NCBIfam" id="NF006873">
    <property type="entry name" value="PRK09369.1"/>
    <property type="match status" value="1"/>
</dbReference>
<dbReference type="PANTHER" id="PTHR43783">
    <property type="entry name" value="UDP-N-ACETYLGLUCOSAMINE 1-CARBOXYVINYLTRANSFERASE"/>
    <property type="match status" value="1"/>
</dbReference>
<dbReference type="PANTHER" id="PTHR43783:SF1">
    <property type="entry name" value="UDP-N-ACETYLGLUCOSAMINE 1-CARBOXYVINYLTRANSFERASE"/>
    <property type="match status" value="1"/>
</dbReference>
<dbReference type="Pfam" id="PF00275">
    <property type="entry name" value="EPSP_synthase"/>
    <property type="match status" value="1"/>
</dbReference>
<dbReference type="SUPFAM" id="SSF55205">
    <property type="entry name" value="EPT/RTPC-like"/>
    <property type="match status" value="1"/>
</dbReference>
<gene>
    <name evidence="1" type="primary">murA</name>
    <name type="ordered locus">NMCC_0012</name>
</gene>
<feature type="chain" id="PRO_1000075974" description="UDP-N-acetylglucosamine 1-carboxyvinyltransferase">
    <location>
        <begin position="1"/>
        <end position="417"/>
    </location>
</feature>
<feature type="active site" description="Proton donor" evidence="1">
    <location>
        <position position="117"/>
    </location>
</feature>
<feature type="binding site" evidence="1">
    <location>
        <begin position="22"/>
        <end position="23"/>
    </location>
    <ligand>
        <name>phosphoenolpyruvate</name>
        <dbReference type="ChEBI" id="CHEBI:58702"/>
    </ligand>
</feature>
<feature type="binding site" evidence="1">
    <location>
        <position position="93"/>
    </location>
    <ligand>
        <name>UDP-N-acetyl-alpha-D-glucosamine</name>
        <dbReference type="ChEBI" id="CHEBI:57705"/>
    </ligand>
</feature>
<feature type="binding site" evidence="1">
    <location>
        <begin position="122"/>
        <end position="126"/>
    </location>
    <ligand>
        <name>UDP-N-acetyl-alpha-D-glucosamine</name>
        <dbReference type="ChEBI" id="CHEBI:57705"/>
    </ligand>
</feature>
<feature type="binding site" evidence="1">
    <location>
        <position position="304"/>
    </location>
    <ligand>
        <name>UDP-N-acetyl-alpha-D-glucosamine</name>
        <dbReference type="ChEBI" id="CHEBI:57705"/>
    </ligand>
</feature>
<feature type="binding site" evidence="1">
    <location>
        <position position="326"/>
    </location>
    <ligand>
        <name>UDP-N-acetyl-alpha-D-glucosamine</name>
        <dbReference type="ChEBI" id="CHEBI:57705"/>
    </ligand>
</feature>
<feature type="modified residue" description="2-(S-cysteinyl)pyruvic acid O-phosphothioketal" evidence="1">
    <location>
        <position position="117"/>
    </location>
</feature>
<reference key="1">
    <citation type="journal article" date="2008" name="Genomics">
        <title>Characterization of ST-4821 complex, a unique Neisseria meningitidis clone.</title>
        <authorList>
            <person name="Peng J."/>
            <person name="Yang L."/>
            <person name="Yang F."/>
            <person name="Yang J."/>
            <person name="Yan Y."/>
            <person name="Nie H."/>
            <person name="Zhang X."/>
            <person name="Xiong Z."/>
            <person name="Jiang Y."/>
            <person name="Cheng F."/>
            <person name="Xu X."/>
            <person name="Chen S."/>
            <person name="Sun L."/>
            <person name="Li W."/>
            <person name="Shen Y."/>
            <person name="Shao Z."/>
            <person name="Liang X."/>
            <person name="Xu J."/>
            <person name="Jin Q."/>
        </authorList>
    </citation>
    <scope>NUCLEOTIDE SEQUENCE [LARGE SCALE GENOMIC DNA]</scope>
    <source>
        <strain>053442</strain>
    </source>
</reference>
<name>MURA_NEIM0</name>
<accession>A9LZI5</accession>
<sequence>MDKLKISANGPLNGEITVSGAKNAALPLMCAGLLTSGTLRLKNVPMLADVKTTQKLLQGMGARVLTDNISEFEINGGTVNNTCAPYELVRTMRASILVLGPTLARFGEAQVSLPGGCAIGSRPVDQHLKGLEAMGAEIVIEHGYVKAKGKLKGTRVAMDVVTVGGTENLLMAATLAEGTTVLENCAIEPEVVDLAECLVKMGAKISGIGTSTMVVEGAGELHGCEHSVVPDRIEAGTFLCAVAITGGRVVLRNAAPKTMEVVLDKLVEAGAVIEAGDDWIAIDMRQRPKAVDIRTVVHPGFPTDMQAQFMALNAVAEGSCRVVETIFENRFMHVPELNRMGANITTEGNTAFVQGVEQLSGAVVKATDLRASASLVIAGLAARGETVVEQIYHLDRGYENIEKKLGSVGAKIERVSG</sequence>
<keyword id="KW-0131">Cell cycle</keyword>
<keyword id="KW-0132">Cell division</keyword>
<keyword id="KW-0133">Cell shape</keyword>
<keyword id="KW-0961">Cell wall biogenesis/degradation</keyword>
<keyword id="KW-0963">Cytoplasm</keyword>
<keyword id="KW-0573">Peptidoglycan synthesis</keyword>
<keyword id="KW-0670">Pyruvate</keyword>
<keyword id="KW-0808">Transferase</keyword>